<dbReference type="EC" id="4.1.1.37" evidence="1"/>
<dbReference type="EMBL" id="AE001273">
    <property type="protein sequence ID" value="AAC68342.1"/>
    <property type="molecule type" value="Genomic_DNA"/>
</dbReference>
<dbReference type="PIR" id="C71476">
    <property type="entry name" value="C71476"/>
</dbReference>
<dbReference type="RefSeq" id="NP_220266.1">
    <property type="nucleotide sequence ID" value="NC_000117.1"/>
</dbReference>
<dbReference type="RefSeq" id="WP_009872125.1">
    <property type="nucleotide sequence ID" value="NC_000117.1"/>
</dbReference>
<dbReference type="SMR" id="O84752"/>
<dbReference type="FunCoup" id="O84752">
    <property type="interactions" value="255"/>
</dbReference>
<dbReference type="STRING" id="272561.CT_747"/>
<dbReference type="EnsemblBacteria" id="AAC68342">
    <property type="protein sequence ID" value="AAC68342"/>
    <property type="gene ID" value="CT_747"/>
</dbReference>
<dbReference type="GeneID" id="884542"/>
<dbReference type="KEGG" id="ctr:CT_747"/>
<dbReference type="PATRIC" id="fig|272561.5.peg.821"/>
<dbReference type="HOGENOM" id="CLU_040933_0_0_0"/>
<dbReference type="InParanoid" id="O84752"/>
<dbReference type="OrthoDB" id="9806656at2"/>
<dbReference type="UniPathway" id="UPA00251">
    <property type="reaction ID" value="UER00321"/>
</dbReference>
<dbReference type="Proteomes" id="UP000000431">
    <property type="component" value="Chromosome"/>
</dbReference>
<dbReference type="GO" id="GO:0005829">
    <property type="term" value="C:cytosol"/>
    <property type="evidence" value="ECO:0000318"/>
    <property type="project" value="GO_Central"/>
</dbReference>
<dbReference type="GO" id="GO:0004853">
    <property type="term" value="F:uroporphyrinogen decarboxylase activity"/>
    <property type="evidence" value="ECO:0000318"/>
    <property type="project" value="GO_Central"/>
</dbReference>
<dbReference type="GO" id="GO:0006783">
    <property type="term" value="P:heme biosynthetic process"/>
    <property type="evidence" value="ECO:0000318"/>
    <property type="project" value="GO_Central"/>
</dbReference>
<dbReference type="GO" id="GO:0006782">
    <property type="term" value="P:protoporphyrinogen IX biosynthetic process"/>
    <property type="evidence" value="ECO:0007669"/>
    <property type="project" value="UniProtKB-UniRule"/>
</dbReference>
<dbReference type="CDD" id="cd00717">
    <property type="entry name" value="URO-D"/>
    <property type="match status" value="1"/>
</dbReference>
<dbReference type="Gene3D" id="3.20.20.210">
    <property type="match status" value="1"/>
</dbReference>
<dbReference type="HAMAP" id="MF_00218">
    <property type="entry name" value="URO_D"/>
    <property type="match status" value="1"/>
</dbReference>
<dbReference type="InterPro" id="IPR038071">
    <property type="entry name" value="UROD/MetE-like_sf"/>
</dbReference>
<dbReference type="InterPro" id="IPR006361">
    <property type="entry name" value="Uroporphyrinogen_deCO2ase_HemE"/>
</dbReference>
<dbReference type="InterPro" id="IPR000257">
    <property type="entry name" value="Uroporphyrinogen_deCOase"/>
</dbReference>
<dbReference type="NCBIfam" id="TIGR01464">
    <property type="entry name" value="hemE"/>
    <property type="match status" value="1"/>
</dbReference>
<dbReference type="PANTHER" id="PTHR21091">
    <property type="entry name" value="METHYLTETRAHYDROFOLATE:HOMOCYSTEINE METHYLTRANSFERASE RELATED"/>
    <property type="match status" value="1"/>
</dbReference>
<dbReference type="PANTHER" id="PTHR21091:SF169">
    <property type="entry name" value="UROPORPHYRINOGEN DECARBOXYLASE"/>
    <property type="match status" value="1"/>
</dbReference>
<dbReference type="Pfam" id="PF01208">
    <property type="entry name" value="URO-D"/>
    <property type="match status" value="1"/>
</dbReference>
<dbReference type="SUPFAM" id="SSF51726">
    <property type="entry name" value="UROD/MetE-like"/>
    <property type="match status" value="1"/>
</dbReference>
<dbReference type="PROSITE" id="PS00906">
    <property type="entry name" value="UROD_1"/>
    <property type="match status" value="1"/>
</dbReference>
<dbReference type="PROSITE" id="PS00907">
    <property type="entry name" value="UROD_2"/>
    <property type="match status" value="1"/>
</dbReference>
<accession>O84752</accession>
<protein>
    <recommendedName>
        <fullName evidence="1">Uroporphyrinogen decarboxylase</fullName>
        <shortName evidence="1">UPD</shortName>
        <shortName evidence="1">URO-D</shortName>
        <ecNumber evidence="1">4.1.1.37</ecNumber>
    </recommendedName>
</protein>
<gene>
    <name evidence="1" type="primary">hemE</name>
    <name type="ordered locus">CT_747</name>
</gene>
<comment type="function">
    <text evidence="1">Catalyzes the decarboxylation of four acetate groups of uroporphyrinogen-III to yield coproporphyrinogen-III.</text>
</comment>
<comment type="catalytic activity">
    <reaction evidence="1">
        <text>uroporphyrinogen III + 4 H(+) = coproporphyrinogen III + 4 CO2</text>
        <dbReference type="Rhea" id="RHEA:19865"/>
        <dbReference type="ChEBI" id="CHEBI:15378"/>
        <dbReference type="ChEBI" id="CHEBI:16526"/>
        <dbReference type="ChEBI" id="CHEBI:57308"/>
        <dbReference type="ChEBI" id="CHEBI:57309"/>
        <dbReference type="EC" id="4.1.1.37"/>
    </reaction>
</comment>
<comment type="pathway">
    <text evidence="1">Porphyrin-containing compound metabolism; protoporphyrin-IX biosynthesis; coproporphyrinogen-III from 5-aminolevulinate: step 4/4.</text>
</comment>
<comment type="subunit">
    <text evidence="1">Homodimer.</text>
</comment>
<comment type="subcellular location">
    <subcellularLocation>
        <location evidence="1">Cytoplasm</location>
    </subcellularLocation>
</comment>
<comment type="similarity">
    <text evidence="1">Belongs to the uroporphyrinogen decarboxylase family.</text>
</comment>
<evidence type="ECO:0000255" key="1">
    <source>
        <dbReference type="HAMAP-Rule" id="MF_00218"/>
    </source>
</evidence>
<sequence length="336" mass="37703">MPMTGFYETISPRDQQRPPIWFLRQVGRYIPQYQELKRNRSLKDFFLDTESIVEATLLGPSLLGVDAAIVFADILSILEGFSVDYRFAPGPEVSYSPHEPLIFTKDPQETFSFLLEAIQQLTKRLTVPLIAFAASPFTLASYLIEGGASRDYPKTIAFLYQYPDRFKALLDEITLGTATYLQMQVQAGAAAIQLFESSSLRLPPHLFAKYVVAPNTKLIRQIKQTGNPPISLFCRCFYQEFLSLYAIGADTLHPDYHVELPEVYRQIHSPGSIQGNFDPALLLLPQDALIAHLEAYLAPLKQQSHYIFNLGHGILPQTPIENVQAVVSCLTSISTS</sequence>
<name>DCUP_CHLTR</name>
<keyword id="KW-0963">Cytoplasm</keyword>
<keyword id="KW-0210">Decarboxylase</keyword>
<keyword id="KW-0456">Lyase</keyword>
<keyword id="KW-0627">Porphyrin biosynthesis</keyword>
<keyword id="KW-1185">Reference proteome</keyword>
<reference key="1">
    <citation type="journal article" date="1998" name="Science">
        <title>Genome sequence of an obligate intracellular pathogen of humans: Chlamydia trachomatis.</title>
        <authorList>
            <person name="Stephens R.S."/>
            <person name="Kalman S."/>
            <person name="Lammel C.J."/>
            <person name="Fan J."/>
            <person name="Marathe R."/>
            <person name="Aravind L."/>
            <person name="Mitchell W.P."/>
            <person name="Olinger L."/>
            <person name="Tatusov R.L."/>
            <person name="Zhao Q."/>
            <person name="Koonin E.V."/>
            <person name="Davis R.W."/>
        </authorList>
    </citation>
    <scope>NUCLEOTIDE SEQUENCE [LARGE SCALE GENOMIC DNA]</scope>
    <source>
        <strain>ATCC VR-885 / DSM 19411 / UW-3/Cx</strain>
    </source>
</reference>
<feature type="chain" id="PRO_0000187597" description="Uroporphyrinogen decarboxylase">
    <location>
        <begin position="1"/>
        <end position="336"/>
    </location>
</feature>
<feature type="binding site" evidence="1">
    <location>
        <begin position="24"/>
        <end position="28"/>
    </location>
    <ligand>
        <name>substrate</name>
    </ligand>
</feature>
<feature type="binding site" evidence="1">
    <location>
        <position position="73"/>
    </location>
    <ligand>
        <name>substrate</name>
    </ligand>
</feature>
<feature type="binding site" evidence="1">
    <location>
        <position position="142"/>
    </location>
    <ligand>
        <name>substrate</name>
    </ligand>
</feature>
<feature type="binding site" evidence="1">
    <location>
        <position position="197"/>
    </location>
    <ligand>
        <name>substrate</name>
    </ligand>
</feature>
<feature type="binding site" evidence="1">
    <location>
        <position position="312"/>
    </location>
    <ligand>
        <name>substrate</name>
    </ligand>
</feature>
<feature type="site" description="Transition state stabilizer" evidence="1">
    <location>
        <position position="73"/>
    </location>
</feature>
<proteinExistence type="inferred from homology"/>
<organism>
    <name type="scientific">Chlamydia trachomatis serovar D (strain ATCC VR-885 / DSM 19411 / UW-3/Cx)</name>
    <dbReference type="NCBI Taxonomy" id="272561"/>
    <lineage>
        <taxon>Bacteria</taxon>
        <taxon>Pseudomonadati</taxon>
        <taxon>Chlamydiota</taxon>
        <taxon>Chlamydiia</taxon>
        <taxon>Chlamydiales</taxon>
        <taxon>Chlamydiaceae</taxon>
        <taxon>Chlamydia/Chlamydophila group</taxon>
        <taxon>Chlamydia</taxon>
    </lineage>
</organism>